<dbReference type="EC" id="6.3.4.5" evidence="1"/>
<dbReference type="EMBL" id="AP009178">
    <property type="protein sequence ID" value="BAF70108.1"/>
    <property type="molecule type" value="Genomic_DNA"/>
</dbReference>
<dbReference type="RefSeq" id="WP_012082371.1">
    <property type="nucleotide sequence ID" value="NC_009662.1"/>
</dbReference>
<dbReference type="SMR" id="A6Q3P9"/>
<dbReference type="FunCoup" id="A6Q3P9">
    <property type="interactions" value="406"/>
</dbReference>
<dbReference type="STRING" id="387092.NIS_0998"/>
<dbReference type="KEGG" id="nis:NIS_0998"/>
<dbReference type="eggNOG" id="COG0137">
    <property type="taxonomic scope" value="Bacteria"/>
</dbReference>
<dbReference type="HOGENOM" id="CLU_032784_4_2_7"/>
<dbReference type="InParanoid" id="A6Q3P9"/>
<dbReference type="OrthoDB" id="9801641at2"/>
<dbReference type="UniPathway" id="UPA00068">
    <property type="reaction ID" value="UER00113"/>
</dbReference>
<dbReference type="Proteomes" id="UP000001118">
    <property type="component" value="Chromosome"/>
</dbReference>
<dbReference type="GO" id="GO:0005737">
    <property type="term" value="C:cytoplasm"/>
    <property type="evidence" value="ECO:0007669"/>
    <property type="project" value="UniProtKB-SubCell"/>
</dbReference>
<dbReference type="GO" id="GO:0004055">
    <property type="term" value="F:argininosuccinate synthase activity"/>
    <property type="evidence" value="ECO:0007669"/>
    <property type="project" value="UniProtKB-UniRule"/>
</dbReference>
<dbReference type="GO" id="GO:0005524">
    <property type="term" value="F:ATP binding"/>
    <property type="evidence" value="ECO:0007669"/>
    <property type="project" value="UniProtKB-UniRule"/>
</dbReference>
<dbReference type="GO" id="GO:0000053">
    <property type="term" value="P:argininosuccinate metabolic process"/>
    <property type="evidence" value="ECO:0007669"/>
    <property type="project" value="TreeGrafter"/>
</dbReference>
<dbReference type="GO" id="GO:0006526">
    <property type="term" value="P:L-arginine biosynthetic process"/>
    <property type="evidence" value="ECO:0007669"/>
    <property type="project" value="UniProtKB-UniRule"/>
</dbReference>
<dbReference type="GO" id="GO:0000050">
    <property type="term" value="P:urea cycle"/>
    <property type="evidence" value="ECO:0007669"/>
    <property type="project" value="TreeGrafter"/>
</dbReference>
<dbReference type="CDD" id="cd01999">
    <property type="entry name" value="ASS"/>
    <property type="match status" value="1"/>
</dbReference>
<dbReference type="FunFam" id="3.40.50.620:FF:000019">
    <property type="entry name" value="Argininosuccinate synthase"/>
    <property type="match status" value="1"/>
</dbReference>
<dbReference type="FunFam" id="3.90.1260.10:FF:000007">
    <property type="entry name" value="Argininosuccinate synthase"/>
    <property type="match status" value="1"/>
</dbReference>
<dbReference type="Gene3D" id="3.90.1260.10">
    <property type="entry name" value="Argininosuccinate synthetase, chain A, domain 2"/>
    <property type="match status" value="1"/>
</dbReference>
<dbReference type="Gene3D" id="3.40.50.620">
    <property type="entry name" value="HUPs"/>
    <property type="match status" value="1"/>
</dbReference>
<dbReference type="Gene3D" id="1.20.5.470">
    <property type="entry name" value="Single helix bin"/>
    <property type="match status" value="1"/>
</dbReference>
<dbReference type="HAMAP" id="MF_00005">
    <property type="entry name" value="Arg_succ_synth_type1"/>
    <property type="match status" value="1"/>
</dbReference>
<dbReference type="InterPro" id="IPR048268">
    <property type="entry name" value="Arginosuc_syn_C"/>
</dbReference>
<dbReference type="InterPro" id="IPR048267">
    <property type="entry name" value="Arginosuc_syn_N"/>
</dbReference>
<dbReference type="InterPro" id="IPR001518">
    <property type="entry name" value="Arginosuc_synth"/>
</dbReference>
<dbReference type="InterPro" id="IPR018223">
    <property type="entry name" value="Arginosuc_synth_CS"/>
</dbReference>
<dbReference type="InterPro" id="IPR023434">
    <property type="entry name" value="Arginosuc_synth_type_1_subfam"/>
</dbReference>
<dbReference type="InterPro" id="IPR024074">
    <property type="entry name" value="AS_cat/multimer_dom_body"/>
</dbReference>
<dbReference type="InterPro" id="IPR014729">
    <property type="entry name" value="Rossmann-like_a/b/a_fold"/>
</dbReference>
<dbReference type="NCBIfam" id="TIGR00032">
    <property type="entry name" value="argG"/>
    <property type="match status" value="1"/>
</dbReference>
<dbReference type="NCBIfam" id="NF001770">
    <property type="entry name" value="PRK00509.1"/>
    <property type="match status" value="1"/>
</dbReference>
<dbReference type="PANTHER" id="PTHR11587">
    <property type="entry name" value="ARGININOSUCCINATE SYNTHASE"/>
    <property type="match status" value="1"/>
</dbReference>
<dbReference type="PANTHER" id="PTHR11587:SF2">
    <property type="entry name" value="ARGININOSUCCINATE SYNTHASE"/>
    <property type="match status" value="1"/>
</dbReference>
<dbReference type="Pfam" id="PF20979">
    <property type="entry name" value="Arginosuc_syn_C"/>
    <property type="match status" value="1"/>
</dbReference>
<dbReference type="Pfam" id="PF00764">
    <property type="entry name" value="Arginosuc_synth"/>
    <property type="match status" value="1"/>
</dbReference>
<dbReference type="SUPFAM" id="SSF52402">
    <property type="entry name" value="Adenine nucleotide alpha hydrolases-like"/>
    <property type="match status" value="1"/>
</dbReference>
<dbReference type="SUPFAM" id="SSF69864">
    <property type="entry name" value="Argininosuccinate synthetase, C-terminal domain"/>
    <property type="match status" value="1"/>
</dbReference>
<dbReference type="PROSITE" id="PS00564">
    <property type="entry name" value="ARGININOSUCCIN_SYN_1"/>
    <property type="match status" value="1"/>
</dbReference>
<dbReference type="PROSITE" id="PS00565">
    <property type="entry name" value="ARGININOSUCCIN_SYN_2"/>
    <property type="match status" value="1"/>
</dbReference>
<name>ASSY_NITSB</name>
<sequence length="405" mass="46162">MTKKVNKVVLAYSGGLDTSVILKWLQETYNCEVVTFTADIGQGEEVEPAREKALKLGIKPENIFIEDLKEEFVRDYVFPMFRANAIYEGEYLLGTSIARPLIAKRQIEIARQVGADAVAHGATGKGNDQVRFEIAYLSLNPDITVIAPWREWDLNSREKLLKFAEEHRIPIEKHGKKSPYSMDANLLHISYEGGILEDPWAEPEEDMWRWTNSIENAPNEPEYITIDFEKGDPVAINGEPLSPAKLLEALNEYGKKHGIGRIDIVENRFVGMKSRGCYETPGGTILLKAHRAMESITLDREEAHEKDKLMPKYAELIYNGFWFSPEREMMQAAIDKTQENVSGTVRLKLYKGNVFVVGRKSPNSLFAPEFSTFEEDEVYNQKDAQGFIKLNALRFIIEGHVRRKK</sequence>
<gene>
    <name evidence="1" type="primary">argG</name>
    <name type="ordered locus">NIS_0998</name>
</gene>
<accession>A6Q3P9</accession>
<evidence type="ECO:0000255" key="1">
    <source>
        <dbReference type="HAMAP-Rule" id="MF_00005"/>
    </source>
</evidence>
<reference key="1">
    <citation type="journal article" date="2007" name="Proc. Natl. Acad. Sci. U.S.A.">
        <title>Deep-sea vent epsilon-proteobacterial genomes provide insights into emergence of pathogens.</title>
        <authorList>
            <person name="Nakagawa S."/>
            <person name="Takaki Y."/>
            <person name="Shimamura S."/>
            <person name="Reysenbach A.-L."/>
            <person name="Takai K."/>
            <person name="Horikoshi K."/>
        </authorList>
    </citation>
    <scope>NUCLEOTIDE SEQUENCE [LARGE SCALE GENOMIC DNA]</scope>
    <source>
        <strain>SB155-2</strain>
    </source>
</reference>
<proteinExistence type="inferred from homology"/>
<organism>
    <name type="scientific">Nitratiruptor sp. (strain SB155-2)</name>
    <dbReference type="NCBI Taxonomy" id="387092"/>
    <lineage>
        <taxon>Bacteria</taxon>
        <taxon>Pseudomonadati</taxon>
        <taxon>Campylobacterota</taxon>
        <taxon>Epsilonproteobacteria</taxon>
        <taxon>Nautiliales</taxon>
        <taxon>Nitratiruptoraceae</taxon>
        <taxon>Nitratiruptor</taxon>
    </lineage>
</organism>
<keyword id="KW-0028">Amino-acid biosynthesis</keyword>
<keyword id="KW-0055">Arginine biosynthesis</keyword>
<keyword id="KW-0067">ATP-binding</keyword>
<keyword id="KW-0963">Cytoplasm</keyword>
<keyword id="KW-0436">Ligase</keyword>
<keyword id="KW-0547">Nucleotide-binding</keyword>
<keyword id="KW-1185">Reference proteome</keyword>
<feature type="chain" id="PRO_1000000415" description="Argininosuccinate synthase">
    <location>
        <begin position="1"/>
        <end position="405"/>
    </location>
</feature>
<feature type="binding site" evidence="1">
    <location>
        <begin position="11"/>
        <end position="19"/>
    </location>
    <ligand>
        <name>ATP</name>
        <dbReference type="ChEBI" id="CHEBI:30616"/>
    </ligand>
</feature>
<feature type="binding site" evidence="1">
    <location>
        <position position="38"/>
    </location>
    <ligand>
        <name>ATP</name>
        <dbReference type="ChEBI" id="CHEBI:30616"/>
    </ligand>
</feature>
<feature type="binding site" evidence="1">
    <location>
        <position position="91"/>
    </location>
    <ligand>
        <name>L-citrulline</name>
        <dbReference type="ChEBI" id="CHEBI:57743"/>
    </ligand>
</feature>
<feature type="binding site" evidence="1">
    <location>
        <position position="96"/>
    </location>
    <ligand>
        <name>L-citrulline</name>
        <dbReference type="ChEBI" id="CHEBI:57743"/>
    </ligand>
</feature>
<feature type="binding site" evidence="1">
    <location>
        <position position="121"/>
    </location>
    <ligand>
        <name>ATP</name>
        <dbReference type="ChEBI" id="CHEBI:30616"/>
    </ligand>
</feature>
<feature type="binding site" evidence="1">
    <location>
        <position position="123"/>
    </location>
    <ligand>
        <name>L-aspartate</name>
        <dbReference type="ChEBI" id="CHEBI:29991"/>
    </ligand>
</feature>
<feature type="binding site" evidence="1">
    <location>
        <position position="127"/>
    </location>
    <ligand>
        <name>L-aspartate</name>
        <dbReference type="ChEBI" id="CHEBI:29991"/>
    </ligand>
</feature>
<feature type="binding site" evidence="1">
    <location>
        <position position="127"/>
    </location>
    <ligand>
        <name>L-citrulline</name>
        <dbReference type="ChEBI" id="CHEBI:57743"/>
    </ligand>
</feature>
<feature type="binding site" evidence="1">
    <location>
        <position position="128"/>
    </location>
    <ligand>
        <name>L-aspartate</name>
        <dbReference type="ChEBI" id="CHEBI:29991"/>
    </ligand>
</feature>
<feature type="binding site" evidence="1">
    <location>
        <position position="131"/>
    </location>
    <ligand>
        <name>L-citrulline</name>
        <dbReference type="ChEBI" id="CHEBI:57743"/>
    </ligand>
</feature>
<feature type="binding site" evidence="1">
    <location>
        <position position="181"/>
    </location>
    <ligand>
        <name>L-citrulline</name>
        <dbReference type="ChEBI" id="CHEBI:57743"/>
    </ligand>
</feature>
<feature type="binding site" evidence="1">
    <location>
        <position position="190"/>
    </location>
    <ligand>
        <name>L-citrulline</name>
        <dbReference type="ChEBI" id="CHEBI:57743"/>
    </ligand>
</feature>
<feature type="binding site" evidence="1">
    <location>
        <position position="266"/>
    </location>
    <ligand>
        <name>L-citrulline</name>
        <dbReference type="ChEBI" id="CHEBI:57743"/>
    </ligand>
</feature>
<feature type="binding site" evidence="1">
    <location>
        <position position="278"/>
    </location>
    <ligand>
        <name>L-citrulline</name>
        <dbReference type="ChEBI" id="CHEBI:57743"/>
    </ligand>
</feature>
<protein>
    <recommendedName>
        <fullName evidence="1">Argininosuccinate synthase</fullName>
        <ecNumber evidence="1">6.3.4.5</ecNumber>
    </recommendedName>
    <alternativeName>
        <fullName evidence="1">Citrulline--aspartate ligase</fullName>
    </alternativeName>
</protein>
<comment type="catalytic activity">
    <reaction evidence="1">
        <text>L-citrulline + L-aspartate + ATP = 2-(N(omega)-L-arginino)succinate + AMP + diphosphate + H(+)</text>
        <dbReference type="Rhea" id="RHEA:10932"/>
        <dbReference type="ChEBI" id="CHEBI:15378"/>
        <dbReference type="ChEBI" id="CHEBI:29991"/>
        <dbReference type="ChEBI" id="CHEBI:30616"/>
        <dbReference type="ChEBI" id="CHEBI:33019"/>
        <dbReference type="ChEBI" id="CHEBI:57472"/>
        <dbReference type="ChEBI" id="CHEBI:57743"/>
        <dbReference type="ChEBI" id="CHEBI:456215"/>
        <dbReference type="EC" id="6.3.4.5"/>
    </reaction>
</comment>
<comment type="pathway">
    <text evidence="1">Amino-acid biosynthesis; L-arginine biosynthesis; L-arginine from L-ornithine and carbamoyl phosphate: step 2/3.</text>
</comment>
<comment type="subunit">
    <text evidence="1">Homotetramer.</text>
</comment>
<comment type="subcellular location">
    <subcellularLocation>
        <location evidence="1">Cytoplasm</location>
    </subcellularLocation>
</comment>
<comment type="similarity">
    <text evidence="1">Belongs to the argininosuccinate synthase family. Type 1 subfamily.</text>
</comment>